<comment type="function">
    <text evidence="3">Transcriptional regulator with a general role in all morphogenetically distinct forms of filamentous growth, namely invasive growth and biofilm formation. May control FLO11 gene expression as part of a promoter-bound complex with FLO8 and MSS1. Important for virulence.</text>
</comment>
<comment type="subunit">
    <text>Interacts with FLO8 and MSS11, both morphogenetic transcription factors binding directly to the FLO11 promoter.</text>
</comment>
<comment type="subcellular location">
    <subcellularLocation>
        <location evidence="1">Nucleus</location>
    </subcellularLocation>
</comment>
<comment type="disruption phenotype">
    <text evidence="3">Defective in filamentation and invasive growth in response to environmental cues. Defective in the formation of biofilms. Displays decreased virulence in the greater wax moth Galleria mellonella infection model.</text>
</comment>
<comment type="similarity">
    <text evidence="4">Belongs to the MFG1 family.</text>
</comment>
<evidence type="ECO:0000250" key="1"/>
<evidence type="ECO:0000256" key="2">
    <source>
        <dbReference type="SAM" id="MobiDB-lite"/>
    </source>
</evidence>
<evidence type="ECO:0000269" key="3">
    <source>
    </source>
</evidence>
<evidence type="ECO:0000305" key="4"/>
<reference key="1">
    <citation type="journal article" date="2004" name="Proc. Natl. Acad. Sci. U.S.A.">
        <title>The diploid genome sequence of Candida albicans.</title>
        <authorList>
            <person name="Jones T."/>
            <person name="Federspiel N.A."/>
            <person name="Chibana H."/>
            <person name="Dungan J."/>
            <person name="Kalman S."/>
            <person name="Magee B.B."/>
            <person name="Newport G."/>
            <person name="Thorstenson Y.R."/>
            <person name="Agabian N."/>
            <person name="Magee P.T."/>
            <person name="Davis R.W."/>
            <person name="Scherer S."/>
        </authorList>
    </citation>
    <scope>NUCLEOTIDE SEQUENCE [LARGE SCALE GENOMIC DNA]</scope>
    <source>
        <strain>SC5314 / ATCC MYA-2876</strain>
    </source>
</reference>
<reference key="2">
    <citation type="journal article" date="2007" name="Genome Biol.">
        <title>Assembly of the Candida albicans genome into sixteen supercontigs aligned on the eight chromosomes.</title>
        <authorList>
            <person name="van het Hoog M."/>
            <person name="Rast T.J."/>
            <person name="Martchenko M."/>
            <person name="Grindle S."/>
            <person name="Dignard D."/>
            <person name="Hogues H."/>
            <person name="Cuomo C."/>
            <person name="Berriman M."/>
            <person name="Scherer S."/>
            <person name="Magee B.B."/>
            <person name="Whiteway M."/>
            <person name="Chibana H."/>
            <person name="Nantel A."/>
            <person name="Magee P.T."/>
        </authorList>
    </citation>
    <scope>GENOME REANNOTATION</scope>
    <source>
        <strain>SC5314 / ATCC MYA-2876</strain>
    </source>
</reference>
<reference key="3">
    <citation type="journal article" date="2013" name="Genome Biol.">
        <title>Assembly of a phased diploid Candida albicans genome facilitates allele-specific measurements and provides a simple model for repeat and indel structure.</title>
        <authorList>
            <person name="Muzzey D."/>
            <person name="Schwartz K."/>
            <person name="Weissman J.S."/>
            <person name="Sherlock G."/>
        </authorList>
    </citation>
    <scope>NUCLEOTIDE SEQUENCE [LARGE SCALE GENOMIC DNA]</scope>
    <scope>GENOME REANNOTATION</scope>
    <source>
        <strain>SC5314 / ATCC MYA-2876</strain>
    </source>
</reference>
<reference key="4">
    <citation type="journal article" date="2012" name="Science">
        <title>Global gene deletion analysis exploring yeast filamentous growth.</title>
        <authorList>
            <person name="Ryan O."/>
            <person name="Shapiro R.S."/>
            <person name="Kurat C.F."/>
            <person name="Mayhew D."/>
            <person name="Baryshnikova A."/>
            <person name="Chin B."/>
            <person name="Lin Z.Y."/>
            <person name="Cox M.J."/>
            <person name="Vizeacoumar F."/>
            <person name="Cheung D."/>
            <person name="Bahr S."/>
            <person name="Tsui K."/>
            <person name="Tebbji F."/>
            <person name="Sellam A."/>
            <person name="Istel F."/>
            <person name="Schwarzmuller T."/>
            <person name="Reynolds T.B."/>
            <person name="Kuchler K."/>
            <person name="Gifford D.K."/>
            <person name="Whiteway M."/>
            <person name="Giaever G."/>
            <person name="Nislow C."/>
            <person name="Costanzo M."/>
            <person name="Gingras A.C."/>
            <person name="Mitra R.D."/>
            <person name="Andrews B."/>
            <person name="Fink G.R."/>
            <person name="Cowen L.E."/>
            <person name="Boone C."/>
        </authorList>
    </citation>
    <scope>FUNCTION</scope>
    <scope>DISRUPTION PHENOTYPE</scope>
</reference>
<protein>
    <recommendedName>
        <fullName>Morphogenetic regulator of filamentous growth protein 1</fullName>
    </recommendedName>
</protein>
<accession>Q59Y46</accession>
<accession>A0A1D8PIC4</accession>
<sequence>MNGNNNTGNLQQSHGPPQQQQQQQMFNQTPQMGFQQAPPPGMQGRGNNAQTPLQQQRFNMSQQQMMAAQQQQQQQQLQQQNAMAAAAAAAAASGRPVPQRNPNYNGSPNPGQTLPLNNNNNNSNNNNNKTGMYNPNALATGMPSSNLQPTSSAGNSRGHTPRMVNQPQPFIPHQQNQPPLPPQQQQQQQQQQQQPTPQLPPQGQTPQQVQMGYPKKVNNGNLVANQSLKSGPMGGPVPMGGPQQARIPPNSSFQQSPQTQFAMPPNSNGPINPQQQQQQHGPNQNPQPTVSGRSPIQRQMIIATTTATGGKGDTNNSVQEQVQQEINTRIIKRNLGNAAIIRVLDLIEFISNQHYENLSNIEFWTKITPANFLPTAILKFNTTNITGGNGNKSLNDITGLNLNFLNSNKATSNNNNNNTNTNTNNSNNNNKPHQFELTTSTAPRFFASCIQTESILKCNISLSGSKFQVLSNGSIVIVSKIGLHFHYKDGSNSALHGTIKILMSKDLRIEWVDLNFSDYQSNISVSALEEKLKSIITDNTSITKKDIKRQKELLDELVKNSQASKLQLTFGIEPQSLRILQLGDVMSSMKSLMEFSMVNNIPSPMKSMELLIASQKNQQMQAFQAQMAVQAQAQAQAQVQAQAQGQNLANFSGSTNLQTDAQRSRQQQQQQQQQQQQQQQQQSLNTSNNNSNSNNSNNNNNNNSNNNNNNNNNNNGKGGIANGSNNISSPSPRTVNAEEPKRKRKQSVNMSNENKRRK</sequence>
<dbReference type="EMBL" id="CP017624">
    <property type="protein sequence ID" value="AOW27861.1"/>
    <property type="molecule type" value="Genomic_DNA"/>
</dbReference>
<dbReference type="RefSeq" id="XP_714447.2">
    <property type="nucleotide sequence ID" value="XM_709354.2"/>
</dbReference>
<dbReference type="BioGRID" id="1226935">
    <property type="interactions" value="2"/>
</dbReference>
<dbReference type="FunCoup" id="Q59Y46">
    <property type="interactions" value="12"/>
</dbReference>
<dbReference type="STRING" id="237561.Q59Y46"/>
<dbReference type="EnsemblFungi" id="C2_08730W_A-T">
    <property type="protein sequence ID" value="C2_08730W_A-T-p1"/>
    <property type="gene ID" value="C2_08730W_A"/>
</dbReference>
<dbReference type="GeneID" id="3643884"/>
<dbReference type="KEGG" id="cal:CAALFM_C208730WA"/>
<dbReference type="CGD" id="CAL0000181361">
    <property type="gene designation" value="MFG1"/>
</dbReference>
<dbReference type="VEuPathDB" id="FungiDB:C2_08730W_A"/>
<dbReference type="eggNOG" id="ENOG502QUF6">
    <property type="taxonomic scope" value="Eukaryota"/>
</dbReference>
<dbReference type="HOGENOM" id="CLU_367595_0_0_1"/>
<dbReference type="InParanoid" id="Q59Y46"/>
<dbReference type="OrthoDB" id="774557at2759"/>
<dbReference type="PRO" id="PR:Q59Y46"/>
<dbReference type="Proteomes" id="UP000000559">
    <property type="component" value="Chromosome 2"/>
</dbReference>
<dbReference type="GO" id="GO:0005634">
    <property type="term" value="C:nucleus"/>
    <property type="evidence" value="ECO:0007669"/>
    <property type="project" value="UniProtKB-SubCell"/>
</dbReference>
<dbReference type="GO" id="GO:0030447">
    <property type="term" value="P:filamentous growth"/>
    <property type="evidence" value="ECO:0000315"/>
    <property type="project" value="CGD"/>
</dbReference>
<dbReference type="InterPro" id="IPR029005">
    <property type="entry name" value="LIM-bd/SEUSS"/>
</dbReference>
<dbReference type="InterPro" id="IPR052145">
    <property type="entry name" value="Mediator/Homeobox_domain"/>
</dbReference>
<dbReference type="PANTHER" id="PTHR24330">
    <property type="entry name" value="HOMEOBOX PROTEIN BARH-LIKE"/>
    <property type="match status" value="1"/>
</dbReference>
<dbReference type="PANTHER" id="PTHR24330:SF19">
    <property type="entry name" value="MEDIATOR OF RNA POLYMERASE II TRANSCRIPTION SUBUNIT 29"/>
    <property type="match status" value="1"/>
</dbReference>
<dbReference type="Pfam" id="PF01803">
    <property type="entry name" value="LIM_bind"/>
    <property type="match status" value="1"/>
</dbReference>
<feature type="chain" id="PRO_0000430246" description="Morphogenetic regulator of filamentous growth protein 1">
    <location>
        <begin position="1"/>
        <end position="758"/>
    </location>
</feature>
<feature type="region of interest" description="Disordered" evidence="2">
    <location>
        <begin position="1"/>
        <end position="49"/>
    </location>
</feature>
<feature type="region of interest" description="Disordered" evidence="2">
    <location>
        <begin position="87"/>
        <end position="293"/>
    </location>
</feature>
<feature type="region of interest" description="Disordered" evidence="2">
    <location>
        <begin position="408"/>
        <end position="433"/>
    </location>
</feature>
<feature type="region of interest" description="Disordered" evidence="2">
    <location>
        <begin position="650"/>
        <end position="758"/>
    </location>
</feature>
<feature type="compositionally biased region" description="Polar residues" evidence="2">
    <location>
        <begin position="1"/>
        <end position="10"/>
    </location>
</feature>
<feature type="compositionally biased region" description="Low complexity" evidence="2">
    <location>
        <begin position="11"/>
        <end position="31"/>
    </location>
</feature>
<feature type="compositionally biased region" description="Polar residues" evidence="2">
    <location>
        <begin position="100"/>
        <end position="116"/>
    </location>
</feature>
<feature type="compositionally biased region" description="Low complexity" evidence="2">
    <location>
        <begin position="117"/>
        <end position="128"/>
    </location>
</feature>
<feature type="compositionally biased region" description="Polar residues" evidence="2">
    <location>
        <begin position="142"/>
        <end position="168"/>
    </location>
</feature>
<feature type="compositionally biased region" description="Low complexity" evidence="2">
    <location>
        <begin position="183"/>
        <end position="210"/>
    </location>
</feature>
<feature type="compositionally biased region" description="Polar residues" evidence="2">
    <location>
        <begin position="218"/>
        <end position="229"/>
    </location>
</feature>
<feature type="compositionally biased region" description="Polar residues" evidence="2">
    <location>
        <begin position="249"/>
        <end position="261"/>
    </location>
</feature>
<feature type="compositionally biased region" description="Low complexity" evidence="2">
    <location>
        <begin position="264"/>
        <end position="288"/>
    </location>
</feature>
<feature type="compositionally biased region" description="Low complexity" evidence="2">
    <location>
        <begin position="408"/>
        <end position="430"/>
    </location>
</feature>
<feature type="compositionally biased region" description="Polar residues" evidence="2">
    <location>
        <begin position="650"/>
        <end position="665"/>
    </location>
</feature>
<feature type="compositionally biased region" description="Low complexity" evidence="2">
    <location>
        <begin position="666"/>
        <end position="715"/>
    </location>
</feature>
<feature type="compositionally biased region" description="Polar residues" evidence="2">
    <location>
        <begin position="722"/>
        <end position="734"/>
    </location>
</feature>
<keyword id="KW-0539">Nucleus</keyword>
<keyword id="KW-1185">Reference proteome</keyword>
<keyword id="KW-0804">Transcription</keyword>
<keyword id="KW-0805">Transcription regulation</keyword>
<gene>
    <name type="primary">MFG1</name>
    <name type="ordered locus">CAALFM_C208730WA</name>
    <name type="ORF">CaO19.11086</name>
    <name type="ORF">CaO19.3603</name>
</gene>
<organism>
    <name type="scientific">Candida albicans (strain SC5314 / ATCC MYA-2876)</name>
    <name type="common">Yeast</name>
    <dbReference type="NCBI Taxonomy" id="237561"/>
    <lineage>
        <taxon>Eukaryota</taxon>
        <taxon>Fungi</taxon>
        <taxon>Dikarya</taxon>
        <taxon>Ascomycota</taxon>
        <taxon>Saccharomycotina</taxon>
        <taxon>Pichiomycetes</taxon>
        <taxon>Debaryomycetaceae</taxon>
        <taxon>Candida/Lodderomyces clade</taxon>
        <taxon>Candida</taxon>
    </lineage>
</organism>
<proteinExistence type="inferred from homology"/>
<name>MFG1_CANAL</name>